<protein>
    <recommendedName>
        <fullName evidence="1">Photosystem II protein D1</fullName>
        <shortName evidence="1">PSII D1 protein</shortName>
        <ecNumber evidence="1">1.10.3.9</ecNumber>
    </recommendedName>
    <alternativeName>
        <fullName evidence="1">Photosystem II Q(B) protein</fullName>
    </alternativeName>
</protein>
<dbReference type="EC" id="1.10.3.9" evidence="1"/>
<dbReference type="EMBL" id="AB001684">
    <property type="protein sequence ID" value="BAA57842.1"/>
    <property type="molecule type" value="Genomic_DNA"/>
</dbReference>
<dbReference type="PIR" id="T07195">
    <property type="entry name" value="T07195"/>
</dbReference>
<dbReference type="RefSeq" id="NP_045767.1">
    <property type="nucleotide sequence ID" value="NC_001865.1"/>
</dbReference>
<dbReference type="SMR" id="P56318"/>
<dbReference type="GeneID" id="809118"/>
<dbReference type="OrthoDB" id="494152at2759"/>
<dbReference type="GO" id="GO:0009535">
    <property type="term" value="C:chloroplast thylakoid membrane"/>
    <property type="evidence" value="ECO:0007669"/>
    <property type="project" value="UniProtKB-SubCell"/>
</dbReference>
<dbReference type="GO" id="GO:0009523">
    <property type="term" value="C:photosystem II"/>
    <property type="evidence" value="ECO:0007669"/>
    <property type="project" value="UniProtKB-KW"/>
</dbReference>
<dbReference type="GO" id="GO:0016168">
    <property type="term" value="F:chlorophyll binding"/>
    <property type="evidence" value="ECO:0007669"/>
    <property type="project" value="UniProtKB-UniRule"/>
</dbReference>
<dbReference type="GO" id="GO:0045156">
    <property type="term" value="F:electron transporter, transferring electrons within the cyclic electron transport pathway of photosynthesis activity"/>
    <property type="evidence" value="ECO:0007669"/>
    <property type="project" value="InterPro"/>
</dbReference>
<dbReference type="GO" id="GO:0005506">
    <property type="term" value="F:iron ion binding"/>
    <property type="evidence" value="ECO:0007669"/>
    <property type="project" value="UniProtKB-UniRule"/>
</dbReference>
<dbReference type="GO" id="GO:0016682">
    <property type="term" value="F:oxidoreductase activity, acting on diphenols and related substances as donors, oxygen as acceptor"/>
    <property type="evidence" value="ECO:0007669"/>
    <property type="project" value="UniProtKB-UniRule"/>
</dbReference>
<dbReference type="GO" id="GO:0010242">
    <property type="term" value="F:oxygen evolving activity"/>
    <property type="evidence" value="ECO:0007669"/>
    <property type="project" value="UniProtKB-EC"/>
</dbReference>
<dbReference type="GO" id="GO:0009772">
    <property type="term" value="P:photosynthetic electron transport in photosystem II"/>
    <property type="evidence" value="ECO:0007669"/>
    <property type="project" value="InterPro"/>
</dbReference>
<dbReference type="GO" id="GO:0009635">
    <property type="term" value="P:response to herbicide"/>
    <property type="evidence" value="ECO:0007669"/>
    <property type="project" value="UniProtKB-KW"/>
</dbReference>
<dbReference type="CDD" id="cd09289">
    <property type="entry name" value="Photosystem-II_D1"/>
    <property type="match status" value="1"/>
</dbReference>
<dbReference type="FunFam" id="1.20.85.10:FF:000002">
    <property type="entry name" value="Photosystem II protein D1"/>
    <property type="match status" value="1"/>
</dbReference>
<dbReference type="Gene3D" id="1.20.85.10">
    <property type="entry name" value="Photosystem II protein D1-like"/>
    <property type="match status" value="1"/>
</dbReference>
<dbReference type="HAMAP" id="MF_01379">
    <property type="entry name" value="PSII_PsbA_D1"/>
    <property type="match status" value="1"/>
</dbReference>
<dbReference type="InterPro" id="IPR055266">
    <property type="entry name" value="D1/D2"/>
</dbReference>
<dbReference type="InterPro" id="IPR036854">
    <property type="entry name" value="Photo_II_D1/D2_sf"/>
</dbReference>
<dbReference type="InterPro" id="IPR000484">
    <property type="entry name" value="Photo_RC_L/M"/>
</dbReference>
<dbReference type="InterPro" id="IPR055265">
    <property type="entry name" value="Photo_RC_L/M_CS"/>
</dbReference>
<dbReference type="InterPro" id="IPR005867">
    <property type="entry name" value="PSII_D1"/>
</dbReference>
<dbReference type="NCBIfam" id="TIGR01151">
    <property type="entry name" value="psbA"/>
    <property type="match status" value="1"/>
</dbReference>
<dbReference type="PANTHER" id="PTHR33149:SF12">
    <property type="entry name" value="PHOTOSYSTEM II D2 PROTEIN"/>
    <property type="match status" value="1"/>
</dbReference>
<dbReference type="PANTHER" id="PTHR33149">
    <property type="entry name" value="PHOTOSYSTEM II PROTEIN D1"/>
    <property type="match status" value="1"/>
</dbReference>
<dbReference type="Pfam" id="PF00124">
    <property type="entry name" value="Photo_RC"/>
    <property type="match status" value="1"/>
</dbReference>
<dbReference type="PRINTS" id="PR00256">
    <property type="entry name" value="REACTNCENTRE"/>
</dbReference>
<dbReference type="SUPFAM" id="SSF81483">
    <property type="entry name" value="Bacterial photosystem II reaction centre, L and M subunits"/>
    <property type="match status" value="1"/>
</dbReference>
<dbReference type="PROSITE" id="PS00244">
    <property type="entry name" value="REACTION_CENTER"/>
    <property type="match status" value="1"/>
</dbReference>
<proteinExistence type="inferred from homology"/>
<keyword id="KW-0007">Acetylation</keyword>
<keyword id="KW-0106">Calcium</keyword>
<keyword id="KW-0148">Chlorophyll</keyword>
<keyword id="KW-0150">Chloroplast</keyword>
<keyword id="KW-0157">Chromophore</keyword>
<keyword id="KW-0249">Electron transport</keyword>
<keyword id="KW-0359">Herbicide resistance</keyword>
<keyword id="KW-0408">Iron</keyword>
<keyword id="KW-0460">Magnesium</keyword>
<keyword id="KW-0464">Manganese</keyword>
<keyword id="KW-0472">Membrane</keyword>
<keyword id="KW-0479">Metal-binding</keyword>
<keyword id="KW-0560">Oxidoreductase</keyword>
<keyword id="KW-0597">Phosphoprotein</keyword>
<keyword id="KW-0602">Photosynthesis</keyword>
<keyword id="KW-0604">Photosystem II</keyword>
<keyword id="KW-0934">Plastid</keyword>
<keyword id="KW-0793">Thylakoid</keyword>
<keyword id="KW-0812">Transmembrane</keyword>
<keyword id="KW-1133">Transmembrane helix</keyword>
<keyword id="KW-0813">Transport</keyword>
<gene>
    <name evidence="1" type="primary">psbA</name>
</gene>
<name>PSBA_CHLVU</name>
<geneLocation type="chloroplast"/>
<comment type="function">
    <text evidence="1">Photosystem II (PSII) is a light-driven water:plastoquinone oxidoreductase that uses light energy to abstract electrons from H(2)O, generating O(2) and a proton gradient subsequently used for ATP formation. It consists of a core antenna complex that captures photons, and an electron transfer chain that converts photonic excitation into a charge separation. The D1/D2 (PsbA/PsbD) reaction center heterodimer binds P680, the primary electron donor of PSII as well as several subsequent electron acceptors.</text>
</comment>
<comment type="catalytic activity">
    <reaction evidence="1">
        <text>2 a plastoquinone + 4 hnu + 2 H2O = 2 a plastoquinol + O2</text>
        <dbReference type="Rhea" id="RHEA:36359"/>
        <dbReference type="Rhea" id="RHEA-COMP:9561"/>
        <dbReference type="Rhea" id="RHEA-COMP:9562"/>
        <dbReference type="ChEBI" id="CHEBI:15377"/>
        <dbReference type="ChEBI" id="CHEBI:15379"/>
        <dbReference type="ChEBI" id="CHEBI:17757"/>
        <dbReference type="ChEBI" id="CHEBI:30212"/>
        <dbReference type="ChEBI" id="CHEBI:62192"/>
        <dbReference type="EC" id="1.10.3.9"/>
    </reaction>
</comment>
<comment type="cofactor">
    <text evidence="1">The D1/D2 heterodimer binds P680, chlorophylls that are the primary electron donor of PSII, and subsequent electron acceptors. It shares a non-heme iron and each subunit binds pheophytin, quinone, additional chlorophylls, carotenoids and lipids. D1 provides most of the ligands for the Mn4-Ca-O5 cluster of the oxygen-evolving complex (OEC). There is also a Cl(-1) ion associated with D1 and D2, which is required for oxygen evolution. The PSII complex binds additional chlorophylls, carotenoids and specific lipids.</text>
</comment>
<comment type="subunit">
    <text evidence="1">PSII is composed of 1 copy each of membrane proteins PsbA, PsbB, PsbC, PsbD, PsbE, PsbF, PsbH, PsbI, PsbJ, PsbK, PsbL, PsbM, PsbT, PsbX, PsbY, PsbZ, Psb30/Ycf12, at least 3 peripheral proteins of the oxygen-evolving complex and a large number of cofactors. It forms dimeric complexes.</text>
</comment>
<comment type="subcellular location">
    <subcellularLocation>
        <location evidence="1">Plastid</location>
        <location evidence="1">Chloroplast thylakoid membrane</location>
        <topology evidence="1">Multi-pass membrane protein</topology>
    </subcellularLocation>
</comment>
<comment type="PTM">
    <text evidence="1">Tyr-161 forms a radical intermediate that is referred to as redox-active TyrZ, YZ or Y-Z.</text>
</comment>
<comment type="PTM">
    <text evidence="1">C-terminally processed by CTPA; processing is essential to allow assembly of the oxygen-evolving complex and thus photosynthetic growth.</text>
</comment>
<comment type="miscellaneous">
    <text evidence="1">2 of the reaction center chlorophylls (ChlD1 and ChlD2) are entirely coordinated by water.</text>
</comment>
<comment type="miscellaneous">
    <text evidence="1">Herbicides such as atrazine, BNT, diuron or ioxynil bind in the Q(B) binding site and block subsequent electron transfer.</text>
</comment>
<comment type="similarity">
    <text evidence="1">Belongs to the reaction center PufL/M/PsbA/D family.</text>
</comment>
<feature type="initiator methionine" description="Removed" evidence="1">
    <location>
        <position position="1"/>
    </location>
</feature>
<feature type="chain" id="PRO_0000090430" description="Photosystem II protein D1" evidence="1">
    <location>
        <begin position="2"/>
        <end position="344"/>
    </location>
</feature>
<feature type="propeptide" id="PRO_0000316445" evidence="1">
    <location>
        <begin position="345"/>
        <end position="353"/>
    </location>
</feature>
<feature type="transmembrane region" description="Helical" evidence="1">
    <location>
        <begin position="29"/>
        <end position="46"/>
    </location>
</feature>
<feature type="transmembrane region" description="Helical" evidence="1">
    <location>
        <begin position="118"/>
        <end position="133"/>
    </location>
</feature>
<feature type="transmembrane region" description="Helical" evidence="1">
    <location>
        <begin position="142"/>
        <end position="156"/>
    </location>
</feature>
<feature type="transmembrane region" description="Helical" evidence="1">
    <location>
        <begin position="197"/>
        <end position="218"/>
    </location>
</feature>
<feature type="transmembrane region" description="Helical" evidence="1">
    <location>
        <begin position="274"/>
        <end position="288"/>
    </location>
</feature>
<feature type="binding site" description="axial binding residue" evidence="1">
    <location>
        <position position="118"/>
    </location>
    <ligand>
        <name>chlorophyll a</name>
        <dbReference type="ChEBI" id="CHEBI:58416"/>
        <label>ChlzD1</label>
    </ligand>
    <ligandPart>
        <name>Mg</name>
        <dbReference type="ChEBI" id="CHEBI:25107"/>
    </ligandPart>
</feature>
<feature type="binding site" evidence="1">
    <location>
        <position position="126"/>
    </location>
    <ligand>
        <name>pheophytin a</name>
        <dbReference type="ChEBI" id="CHEBI:136840"/>
        <label>D1</label>
    </ligand>
</feature>
<feature type="binding site" evidence="1">
    <location>
        <position position="170"/>
    </location>
    <ligand>
        <name>[CaMn4O5] cluster</name>
        <dbReference type="ChEBI" id="CHEBI:189552"/>
    </ligand>
</feature>
<feature type="binding site" evidence="1">
    <location>
        <position position="189"/>
    </location>
    <ligand>
        <name>[CaMn4O5] cluster</name>
        <dbReference type="ChEBI" id="CHEBI:189552"/>
    </ligand>
</feature>
<feature type="binding site" description="axial binding residue" evidence="1">
    <location>
        <position position="198"/>
    </location>
    <ligand>
        <name>chlorophyll a</name>
        <dbReference type="ChEBI" id="CHEBI:58416"/>
        <label>PD1</label>
    </ligand>
    <ligandPart>
        <name>Mg</name>
        <dbReference type="ChEBI" id="CHEBI:25107"/>
    </ligandPart>
</feature>
<feature type="binding site" evidence="1">
    <location>
        <position position="215"/>
    </location>
    <ligand>
        <name>a quinone</name>
        <dbReference type="ChEBI" id="CHEBI:132124"/>
        <label>B</label>
    </ligand>
</feature>
<feature type="binding site" evidence="1">
    <location>
        <position position="215"/>
    </location>
    <ligand>
        <name>Fe cation</name>
        <dbReference type="ChEBI" id="CHEBI:24875"/>
        <note>ligand shared with heterodimeric partner</note>
    </ligand>
</feature>
<feature type="binding site" evidence="1">
    <location>
        <begin position="264"/>
        <end position="265"/>
    </location>
    <ligand>
        <name>a quinone</name>
        <dbReference type="ChEBI" id="CHEBI:132124"/>
        <label>B</label>
    </ligand>
</feature>
<feature type="binding site" evidence="1">
    <location>
        <position position="272"/>
    </location>
    <ligand>
        <name>Fe cation</name>
        <dbReference type="ChEBI" id="CHEBI:24875"/>
        <note>ligand shared with heterodimeric partner</note>
    </ligand>
</feature>
<feature type="binding site" evidence="1">
    <location>
        <position position="332"/>
    </location>
    <ligand>
        <name>[CaMn4O5] cluster</name>
        <dbReference type="ChEBI" id="CHEBI:189552"/>
    </ligand>
</feature>
<feature type="binding site" evidence="1">
    <location>
        <position position="333"/>
    </location>
    <ligand>
        <name>[CaMn4O5] cluster</name>
        <dbReference type="ChEBI" id="CHEBI:189552"/>
    </ligand>
</feature>
<feature type="binding site" evidence="1">
    <location>
        <position position="342"/>
    </location>
    <ligand>
        <name>[CaMn4O5] cluster</name>
        <dbReference type="ChEBI" id="CHEBI:189552"/>
    </ligand>
</feature>
<feature type="binding site" evidence="1">
    <location>
        <position position="344"/>
    </location>
    <ligand>
        <name>[CaMn4O5] cluster</name>
        <dbReference type="ChEBI" id="CHEBI:189552"/>
    </ligand>
</feature>
<feature type="site" description="Tyrosine radical intermediate" evidence="1">
    <location>
        <position position="161"/>
    </location>
</feature>
<feature type="site" description="Stabilizes free radical intermediate" evidence="1">
    <location>
        <position position="190"/>
    </location>
</feature>
<feature type="site" description="Cleavage; by CTPA" evidence="1">
    <location>
        <begin position="344"/>
        <end position="345"/>
    </location>
</feature>
<feature type="modified residue" description="N-acetylthreonine" evidence="1">
    <location>
        <position position="2"/>
    </location>
</feature>
<feature type="modified residue" description="Phosphothreonine" evidence="1">
    <location>
        <position position="2"/>
    </location>
</feature>
<evidence type="ECO:0000255" key="1">
    <source>
        <dbReference type="HAMAP-Rule" id="MF_01379"/>
    </source>
</evidence>
<sequence length="353" mass="38986">MTAILERRESASLWARFCEWVTSTENRLYIGWFGVLMIPTLLTATSVFIIAFIAAPPVDIDGIREPVSGSLLYGNNIISGAIIPTSNAIGLHFYPIWEAASLDEWLYNGGPYQLIVCHFFLGICSYMGREWELSFRLGMRPWIAVAYSAPVAAATAVFIIYPIGQGSFSDGMPLGISGTFNFMIVFQAEHNILMHPFHMLGVAGVFGGSLFSAMHGSLVTSSLIRETTENESANEGYKFGQEEETYNIVAAHGYFGRLIFQYASFNNSRSLHFFLAAWPVVGIWFTALGISTMAFNLNGFNFNQSVVDSQGRVINTWADIINRANLGMEVMHERNAHNFPLDLAVVEAPAVNG</sequence>
<accession>P56318</accession>
<reference key="1">
    <citation type="journal article" date="1997" name="Proc. Natl. Acad. Sci. U.S.A.">
        <title>Complete nucleotide sequence of the chloroplast genome from the green alga Chlorella vulgaris: the existence of genes possibly involved in chloroplast division.</title>
        <authorList>
            <person name="Wakasugi T."/>
            <person name="Nagai T."/>
            <person name="Kapoor M."/>
            <person name="Sugita M."/>
            <person name="Ito M."/>
            <person name="Ito S."/>
            <person name="Tsudzuki J."/>
            <person name="Nakashima K."/>
            <person name="Tsudzuki T."/>
            <person name="Suzuki Y."/>
            <person name="Hamada A."/>
            <person name="Ohta T."/>
            <person name="Inamura A."/>
            <person name="Yoshinaga K."/>
            <person name="Sugiura M."/>
        </authorList>
    </citation>
    <scope>NUCLEOTIDE SEQUENCE [LARGE SCALE GENOMIC DNA]</scope>
    <source>
        <strain>IAM C-27 / Tamiya</strain>
    </source>
</reference>
<organism>
    <name type="scientific">Chlorella vulgaris</name>
    <name type="common">Green alga</name>
    <dbReference type="NCBI Taxonomy" id="3077"/>
    <lineage>
        <taxon>Eukaryota</taxon>
        <taxon>Viridiplantae</taxon>
        <taxon>Chlorophyta</taxon>
        <taxon>core chlorophytes</taxon>
        <taxon>Trebouxiophyceae</taxon>
        <taxon>Chlorellales</taxon>
        <taxon>Chlorellaceae</taxon>
        <taxon>Chlorella clade</taxon>
        <taxon>Chlorella</taxon>
    </lineage>
</organism>